<sequence length="554" mass="62151">MSSVGIASASLWLRGPVKSALKGRWLSCEQMRRYGTKSAPAVRKGGHSKKARQAPSLPFVFGRHKQLTGPEFTRRTRIGNLSDKITKFEQLKLLPEVREVMMKVIASESVLNKSLDDEDCGLDDKRVAAFLGQVQPTPIQTAVIKKMAKTLMEPQLQVHMVAAETGSGKTMSYLMPLVDYLKQEEQAAGTEEGRARLGALRSLILVPTHELVEQVYMTLEKLQEPLQLKTFKLDRDTPYKDIVEAFKGRVDIMVTTPGKLRGLFKIRMLHRPDRILSQVRFAVVDEADTLMDQSWVQETYSCIKSLRDANHLVFCSASVPMEFEKAMNKLFPNLQVVASEKLHRINKHSNIKIINVALRPYNGSKMKALAQALYAIMKDGTSEGYEKRCVVFVNEADSVNSIVDTLRDKFGHDVHGLTGEHSLDDRLATIAPFMRSPPRIQDQVRPSELKKPQERRLPNSNIKVADSKDNGQRSVSSPLKVLVTTDVLSRGINFKGVKHVILYDVPAKSIDLVHRVGRTSRMNERGHVYIFVGKKGSAQAKGLNPVVKKNRPIQ</sequence>
<organism>
    <name type="scientific">Eremothecium gossypii (strain ATCC 10895 / CBS 109.51 / FGSC 9923 / NRRL Y-1056)</name>
    <name type="common">Yeast</name>
    <name type="synonym">Ashbya gossypii</name>
    <dbReference type="NCBI Taxonomy" id="284811"/>
    <lineage>
        <taxon>Eukaryota</taxon>
        <taxon>Fungi</taxon>
        <taxon>Dikarya</taxon>
        <taxon>Ascomycota</taxon>
        <taxon>Saccharomycotina</taxon>
        <taxon>Saccharomycetes</taxon>
        <taxon>Saccharomycetales</taxon>
        <taxon>Saccharomycetaceae</taxon>
        <taxon>Eremothecium</taxon>
    </lineage>
</organism>
<keyword id="KW-0067">ATP-binding</keyword>
<keyword id="KW-0347">Helicase</keyword>
<keyword id="KW-0378">Hydrolase</keyword>
<keyword id="KW-0496">Mitochondrion</keyword>
<keyword id="KW-0547">Nucleotide-binding</keyword>
<keyword id="KW-1185">Reference proteome</keyword>
<keyword id="KW-0694">RNA-binding</keyword>
<keyword id="KW-0809">Transit peptide</keyword>
<gene>
    <name type="primary">MRH4</name>
    <name type="ordered locus">AFL102W</name>
</gene>
<dbReference type="EC" id="3.6.4.13"/>
<dbReference type="EMBL" id="AE016819">
    <property type="protein sequence ID" value="AAS53272.1"/>
    <property type="molecule type" value="Genomic_DNA"/>
</dbReference>
<dbReference type="RefSeq" id="NP_985448.1">
    <property type="nucleotide sequence ID" value="NM_210802.1"/>
</dbReference>
<dbReference type="SMR" id="Q755C5"/>
<dbReference type="FunCoup" id="Q755C5">
    <property type="interactions" value="158"/>
</dbReference>
<dbReference type="STRING" id="284811.Q755C5"/>
<dbReference type="EnsemblFungi" id="AAS53272">
    <property type="protein sequence ID" value="AAS53272"/>
    <property type="gene ID" value="AGOS_AFL102W"/>
</dbReference>
<dbReference type="GeneID" id="4621675"/>
<dbReference type="KEGG" id="ago:AGOS_AFL102W"/>
<dbReference type="eggNOG" id="KOG0335">
    <property type="taxonomic scope" value="Eukaryota"/>
</dbReference>
<dbReference type="HOGENOM" id="CLU_003041_18_0_1"/>
<dbReference type="InParanoid" id="Q755C5"/>
<dbReference type="OMA" id="HSTIDFI"/>
<dbReference type="OrthoDB" id="10256233at2759"/>
<dbReference type="Proteomes" id="UP000000591">
    <property type="component" value="Chromosome VI"/>
</dbReference>
<dbReference type="GO" id="GO:0005759">
    <property type="term" value="C:mitochondrial matrix"/>
    <property type="evidence" value="ECO:0007669"/>
    <property type="project" value="EnsemblFungi"/>
</dbReference>
<dbReference type="GO" id="GO:0005730">
    <property type="term" value="C:nucleolus"/>
    <property type="evidence" value="ECO:0000318"/>
    <property type="project" value="GO_Central"/>
</dbReference>
<dbReference type="GO" id="GO:0005524">
    <property type="term" value="F:ATP binding"/>
    <property type="evidence" value="ECO:0007669"/>
    <property type="project" value="UniProtKB-KW"/>
</dbReference>
<dbReference type="GO" id="GO:0016887">
    <property type="term" value="F:ATP hydrolysis activity"/>
    <property type="evidence" value="ECO:0007669"/>
    <property type="project" value="RHEA"/>
</dbReference>
<dbReference type="GO" id="GO:1990400">
    <property type="term" value="F:mitochondrial ribosomal large subunit rRNA binding"/>
    <property type="evidence" value="ECO:0007669"/>
    <property type="project" value="EnsemblFungi"/>
</dbReference>
<dbReference type="GO" id="GO:0003724">
    <property type="term" value="F:RNA helicase activity"/>
    <property type="evidence" value="ECO:0007669"/>
    <property type="project" value="UniProtKB-EC"/>
</dbReference>
<dbReference type="GO" id="GO:0000463">
    <property type="term" value="P:maturation of LSU-rRNA from tricistronic rRNA transcript (SSU-rRNA, 5.8S rRNA, LSU-rRNA)"/>
    <property type="evidence" value="ECO:0000318"/>
    <property type="project" value="GO_Central"/>
</dbReference>
<dbReference type="GO" id="GO:1902775">
    <property type="term" value="P:mitochondrial large ribosomal subunit assembly"/>
    <property type="evidence" value="ECO:0007669"/>
    <property type="project" value="EnsemblFungi"/>
</dbReference>
<dbReference type="CDD" id="cd17965">
    <property type="entry name" value="DEADc_MRH4"/>
    <property type="match status" value="1"/>
</dbReference>
<dbReference type="CDD" id="cd18787">
    <property type="entry name" value="SF2_C_DEAD"/>
    <property type="match status" value="1"/>
</dbReference>
<dbReference type="Gene3D" id="3.40.50.300">
    <property type="entry name" value="P-loop containing nucleotide triphosphate hydrolases"/>
    <property type="match status" value="2"/>
</dbReference>
<dbReference type="InterPro" id="IPR011545">
    <property type="entry name" value="DEAD/DEAH_box_helicase_dom"/>
</dbReference>
<dbReference type="InterPro" id="IPR014001">
    <property type="entry name" value="Helicase_ATP-bd"/>
</dbReference>
<dbReference type="InterPro" id="IPR001650">
    <property type="entry name" value="Helicase_C-like"/>
</dbReference>
<dbReference type="InterPro" id="IPR027417">
    <property type="entry name" value="P-loop_NTPase"/>
</dbReference>
<dbReference type="PANTHER" id="PTHR24031">
    <property type="entry name" value="RNA HELICASE"/>
    <property type="match status" value="1"/>
</dbReference>
<dbReference type="Pfam" id="PF00270">
    <property type="entry name" value="DEAD"/>
    <property type="match status" value="1"/>
</dbReference>
<dbReference type="Pfam" id="PF00271">
    <property type="entry name" value="Helicase_C"/>
    <property type="match status" value="1"/>
</dbReference>
<dbReference type="SMART" id="SM00487">
    <property type="entry name" value="DEXDc"/>
    <property type="match status" value="1"/>
</dbReference>
<dbReference type="SMART" id="SM00490">
    <property type="entry name" value="HELICc"/>
    <property type="match status" value="1"/>
</dbReference>
<dbReference type="SUPFAM" id="SSF52540">
    <property type="entry name" value="P-loop containing nucleoside triphosphate hydrolases"/>
    <property type="match status" value="1"/>
</dbReference>
<dbReference type="PROSITE" id="PS51192">
    <property type="entry name" value="HELICASE_ATP_BIND_1"/>
    <property type="match status" value="1"/>
</dbReference>
<dbReference type="PROSITE" id="PS51194">
    <property type="entry name" value="HELICASE_CTER"/>
    <property type="match status" value="1"/>
</dbReference>
<accession>Q755C5</accession>
<evidence type="ECO:0000250" key="1"/>
<evidence type="ECO:0000255" key="2"/>
<evidence type="ECO:0000255" key="3">
    <source>
        <dbReference type="PROSITE-ProRule" id="PRU00541"/>
    </source>
</evidence>
<evidence type="ECO:0000255" key="4">
    <source>
        <dbReference type="PROSITE-ProRule" id="PRU00542"/>
    </source>
</evidence>
<evidence type="ECO:0000256" key="5">
    <source>
        <dbReference type="SAM" id="MobiDB-lite"/>
    </source>
</evidence>
<evidence type="ECO:0000305" key="6"/>
<feature type="transit peptide" description="Mitochondrion" evidence="2">
    <location>
        <begin position="1"/>
        <end position="54"/>
    </location>
</feature>
<feature type="chain" id="PRO_0000227962" description="ATP-dependent RNA helicase MRH4, mitochondrial">
    <location>
        <begin position="55"/>
        <end position="554"/>
    </location>
</feature>
<feature type="domain" description="Helicase ATP-binding" evidence="3">
    <location>
        <begin position="150"/>
        <end position="337"/>
    </location>
</feature>
<feature type="domain" description="Helicase C-terminal" evidence="4">
    <location>
        <begin position="368"/>
        <end position="554"/>
    </location>
</feature>
<feature type="region of interest" description="Disordered" evidence="5">
    <location>
        <begin position="439"/>
        <end position="474"/>
    </location>
</feature>
<feature type="short sequence motif" description="Q motif">
    <location>
        <begin position="119"/>
        <end position="140"/>
    </location>
</feature>
<feature type="short sequence motif" description="DEAD box">
    <location>
        <begin position="285"/>
        <end position="288"/>
    </location>
</feature>
<feature type="compositionally biased region" description="Basic and acidic residues" evidence="5">
    <location>
        <begin position="445"/>
        <end position="457"/>
    </location>
</feature>
<feature type="binding site" evidence="3">
    <location>
        <begin position="163"/>
        <end position="170"/>
    </location>
    <ligand>
        <name>ATP</name>
        <dbReference type="ChEBI" id="CHEBI:30616"/>
    </ligand>
</feature>
<reference key="1">
    <citation type="journal article" date="2004" name="Science">
        <title>The Ashbya gossypii genome as a tool for mapping the ancient Saccharomyces cerevisiae genome.</title>
        <authorList>
            <person name="Dietrich F.S."/>
            <person name="Voegeli S."/>
            <person name="Brachat S."/>
            <person name="Lerch A."/>
            <person name="Gates K."/>
            <person name="Steiner S."/>
            <person name="Mohr C."/>
            <person name="Poehlmann R."/>
            <person name="Luedi P."/>
            <person name="Choi S."/>
            <person name="Wing R.A."/>
            <person name="Flavier A."/>
            <person name="Gaffney T.D."/>
            <person name="Philippsen P."/>
        </authorList>
    </citation>
    <scope>NUCLEOTIDE SEQUENCE [LARGE SCALE GENOMIC DNA]</scope>
    <source>
        <strain>ATCC 10895 / CBS 109.51 / FGSC 9923 / NRRL Y-1056</strain>
    </source>
</reference>
<reference key="2">
    <citation type="journal article" date="2013" name="G3 (Bethesda)">
        <title>Genomes of Ashbya fungi isolated from insects reveal four mating-type loci, numerous translocations, lack of transposons, and distinct gene duplications.</title>
        <authorList>
            <person name="Dietrich F.S."/>
            <person name="Voegeli S."/>
            <person name="Kuo S."/>
            <person name="Philippsen P."/>
        </authorList>
    </citation>
    <scope>GENOME REANNOTATION</scope>
    <source>
        <strain>ATCC 10895 / CBS 109.51 / FGSC 9923 / NRRL Y-1056</strain>
    </source>
</reference>
<proteinExistence type="inferred from homology"/>
<comment type="function">
    <text evidence="1">ATP-binding RNA helicase involved in mitochondrial RNA metabolism. Required for maintenance of mitochondrial DNA (By similarity).</text>
</comment>
<comment type="catalytic activity">
    <reaction>
        <text>ATP + H2O = ADP + phosphate + H(+)</text>
        <dbReference type="Rhea" id="RHEA:13065"/>
        <dbReference type="ChEBI" id="CHEBI:15377"/>
        <dbReference type="ChEBI" id="CHEBI:15378"/>
        <dbReference type="ChEBI" id="CHEBI:30616"/>
        <dbReference type="ChEBI" id="CHEBI:43474"/>
        <dbReference type="ChEBI" id="CHEBI:456216"/>
        <dbReference type="EC" id="3.6.4.13"/>
    </reaction>
</comment>
<comment type="subcellular location">
    <subcellularLocation>
        <location evidence="1">Mitochondrion</location>
    </subcellularLocation>
</comment>
<comment type="domain">
    <text>The Q motif is unique to and characteristic of the DEAD box family of RNA helicases and controls ATP binding and hydrolysis.</text>
</comment>
<comment type="similarity">
    <text evidence="6">Belongs to the DEAD box helicase family. MRH4 subfamily.</text>
</comment>
<protein>
    <recommendedName>
        <fullName>ATP-dependent RNA helicase MRH4, mitochondrial</fullName>
        <ecNumber>3.6.4.13</ecNumber>
    </recommendedName>
</protein>
<name>MRH4_EREGS</name>